<gene>
    <name evidence="1" type="primary">groEL2</name>
    <name evidence="1" type="synonym">groL2</name>
    <name type="ordered locus">jk1728</name>
</gene>
<comment type="function">
    <text evidence="1">Together with its co-chaperonin GroES, plays an essential role in assisting protein folding. The GroEL-GroES system forms a nano-cage that allows encapsulation of the non-native substrate proteins and provides a physical environment optimized to promote and accelerate protein folding.</text>
</comment>
<comment type="catalytic activity">
    <reaction evidence="1">
        <text>ATP + H2O + a folded polypeptide = ADP + phosphate + an unfolded polypeptide.</text>
        <dbReference type="EC" id="5.6.1.7"/>
    </reaction>
</comment>
<comment type="subunit">
    <text evidence="1">Forms a cylinder of 14 subunits composed of two heptameric rings stacked back-to-back. Interacts with the co-chaperonin GroES.</text>
</comment>
<comment type="subcellular location">
    <subcellularLocation>
        <location evidence="1">Cytoplasm</location>
    </subcellularLocation>
</comment>
<comment type="similarity">
    <text evidence="1">Belongs to the chaperonin (HSP60) family.</text>
</comment>
<accession>Q4JTF2</accession>
<name>CH602_CORJK</name>
<protein>
    <recommendedName>
        <fullName evidence="1">Chaperonin GroEL 2</fullName>
        <ecNumber evidence="1">5.6.1.7</ecNumber>
    </recommendedName>
    <alternativeName>
        <fullName evidence="1">60 kDa chaperonin 2</fullName>
    </alternativeName>
    <alternativeName>
        <fullName evidence="1">Chaperonin-60 2</fullName>
        <shortName evidence="1">Cpn60 2</shortName>
    </alternativeName>
</protein>
<feature type="chain" id="PRO_0000256899" description="Chaperonin GroEL 2">
    <location>
        <begin position="1"/>
        <end position="541"/>
    </location>
</feature>
<feature type="binding site" evidence="1">
    <location>
        <begin position="29"/>
        <end position="32"/>
    </location>
    <ligand>
        <name>ATP</name>
        <dbReference type="ChEBI" id="CHEBI:30616"/>
    </ligand>
</feature>
<feature type="binding site" evidence="1">
    <location>
        <begin position="86"/>
        <end position="90"/>
    </location>
    <ligand>
        <name>ATP</name>
        <dbReference type="ChEBI" id="CHEBI:30616"/>
    </ligand>
</feature>
<feature type="binding site" evidence="1">
    <location>
        <position position="413"/>
    </location>
    <ligand>
        <name>ATP</name>
        <dbReference type="ChEBI" id="CHEBI:30616"/>
    </ligand>
</feature>
<feature type="binding site" evidence="1">
    <location>
        <begin position="478"/>
        <end position="480"/>
    </location>
    <ligand>
        <name>ATP</name>
        <dbReference type="ChEBI" id="CHEBI:30616"/>
    </ligand>
</feature>
<feature type="binding site" evidence="1">
    <location>
        <position position="494"/>
    </location>
    <ligand>
        <name>ATP</name>
        <dbReference type="ChEBI" id="CHEBI:30616"/>
    </ligand>
</feature>
<sequence>MSKLIAFDQEAREGLQKGVDALADAVKVTLGPRGRNVVLDKAFGGPTVTNDGVTIARDIDLEDPFENLGAQLVKSVAIKTNDIAGDGTTTATLLAQALVNEGLRTVAAGANPIAVNRGIAKGTERVVELLRELAQPVADNAAIANVATVSSRDEKIGAMVADAFDKVGKDGVVTVEESQSIEDESIVTEGVSFDKGYLSPYFVTDQETGHAELENPLILLVREKISSLPDFLPVLEKVANSGKPLLIVAEDIEGEPLQMLVLNAIRKSLKVAAVKSPYFGDRRSAFMDDLAIVTGGTVIDSELGHKLSETTLEQLGSARRVNITKEETVLVDGAGSAEAVEERRNQIRNDIERTDSSWDKEKFEERLAKLSGGVAVIRAGGATETEVNERKLRIEDAINAARAAGQEGVIAGGGSVLVQIADEIEELSRKEEGDEGIGLRSLARALRRPAYWIADNAGLDGAVVVSKIAEQPNGSGFNAATLEYGNLLEQGIIDPVKVTHSAVVNATSVARMVLTTETAVVDKPAAPAGQAGAHAGHAHAH</sequence>
<keyword id="KW-0067">ATP-binding</keyword>
<keyword id="KW-0143">Chaperone</keyword>
<keyword id="KW-0963">Cytoplasm</keyword>
<keyword id="KW-0413">Isomerase</keyword>
<keyword id="KW-0547">Nucleotide-binding</keyword>
<keyword id="KW-1185">Reference proteome</keyword>
<proteinExistence type="inferred from homology"/>
<reference key="1">
    <citation type="journal article" date="2005" name="J. Bacteriol.">
        <title>Complete genome sequence and analysis of the multiresistant nosocomial pathogen Corynebacterium jeikeium K411, a lipid-requiring bacterium of the human skin flora.</title>
        <authorList>
            <person name="Tauch A."/>
            <person name="Kaiser O."/>
            <person name="Hain T."/>
            <person name="Goesmann A."/>
            <person name="Weisshaar B."/>
            <person name="Albersmeier A."/>
            <person name="Bekel T."/>
            <person name="Bischoff N."/>
            <person name="Brune I."/>
            <person name="Chakraborty T."/>
            <person name="Kalinowski J."/>
            <person name="Meyer F."/>
            <person name="Rupp O."/>
            <person name="Schneiker S."/>
            <person name="Viehoever P."/>
            <person name="Puehler A."/>
        </authorList>
    </citation>
    <scope>NUCLEOTIDE SEQUENCE [LARGE SCALE GENOMIC DNA]</scope>
    <source>
        <strain>K411</strain>
    </source>
</reference>
<dbReference type="EC" id="5.6.1.7" evidence="1"/>
<dbReference type="EMBL" id="CR931997">
    <property type="protein sequence ID" value="CAI37905.1"/>
    <property type="molecule type" value="Genomic_DNA"/>
</dbReference>
<dbReference type="RefSeq" id="WP_011274096.1">
    <property type="nucleotide sequence ID" value="NC_007164.1"/>
</dbReference>
<dbReference type="SMR" id="Q4JTF2"/>
<dbReference type="STRING" id="306537.jk1728"/>
<dbReference type="KEGG" id="cjk:jk1728"/>
<dbReference type="PATRIC" id="fig|306537.10.peg.1750"/>
<dbReference type="eggNOG" id="COG0459">
    <property type="taxonomic scope" value="Bacteria"/>
</dbReference>
<dbReference type="HOGENOM" id="CLU_016503_3_0_11"/>
<dbReference type="OrthoDB" id="9766614at2"/>
<dbReference type="Proteomes" id="UP000000545">
    <property type="component" value="Chromosome"/>
</dbReference>
<dbReference type="GO" id="GO:0005737">
    <property type="term" value="C:cytoplasm"/>
    <property type="evidence" value="ECO:0007669"/>
    <property type="project" value="UniProtKB-SubCell"/>
</dbReference>
<dbReference type="GO" id="GO:0005524">
    <property type="term" value="F:ATP binding"/>
    <property type="evidence" value="ECO:0007669"/>
    <property type="project" value="UniProtKB-UniRule"/>
</dbReference>
<dbReference type="GO" id="GO:0140662">
    <property type="term" value="F:ATP-dependent protein folding chaperone"/>
    <property type="evidence" value="ECO:0007669"/>
    <property type="project" value="InterPro"/>
</dbReference>
<dbReference type="GO" id="GO:0016853">
    <property type="term" value="F:isomerase activity"/>
    <property type="evidence" value="ECO:0007669"/>
    <property type="project" value="UniProtKB-KW"/>
</dbReference>
<dbReference type="GO" id="GO:0051082">
    <property type="term" value="F:unfolded protein binding"/>
    <property type="evidence" value="ECO:0007669"/>
    <property type="project" value="UniProtKB-UniRule"/>
</dbReference>
<dbReference type="GO" id="GO:0042026">
    <property type="term" value="P:protein refolding"/>
    <property type="evidence" value="ECO:0007669"/>
    <property type="project" value="UniProtKB-UniRule"/>
</dbReference>
<dbReference type="CDD" id="cd03344">
    <property type="entry name" value="GroEL"/>
    <property type="match status" value="1"/>
</dbReference>
<dbReference type="FunFam" id="3.50.7.10:FF:000001">
    <property type="entry name" value="60 kDa chaperonin"/>
    <property type="match status" value="1"/>
</dbReference>
<dbReference type="Gene3D" id="3.50.7.10">
    <property type="entry name" value="GroEL"/>
    <property type="match status" value="1"/>
</dbReference>
<dbReference type="Gene3D" id="1.10.560.10">
    <property type="entry name" value="GroEL-like equatorial domain"/>
    <property type="match status" value="1"/>
</dbReference>
<dbReference type="Gene3D" id="3.30.260.10">
    <property type="entry name" value="TCP-1-like chaperonin intermediate domain"/>
    <property type="match status" value="1"/>
</dbReference>
<dbReference type="HAMAP" id="MF_00600">
    <property type="entry name" value="CH60"/>
    <property type="match status" value="1"/>
</dbReference>
<dbReference type="InterPro" id="IPR018370">
    <property type="entry name" value="Chaperonin_Cpn60_CS"/>
</dbReference>
<dbReference type="InterPro" id="IPR001844">
    <property type="entry name" value="Cpn60/GroEL"/>
</dbReference>
<dbReference type="InterPro" id="IPR002423">
    <property type="entry name" value="Cpn60/GroEL/TCP-1"/>
</dbReference>
<dbReference type="InterPro" id="IPR027409">
    <property type="entry name" value="GroEL-like_apical_dom_sf"/>
</dbReference>
<dbReference type="InterPro" id="IPR027413">
    <property type="entry name" value="GROEL-like_equatorial_sf"/>
</dbReference>
<dbReference type="InterPro" id="IPR027410">
    <property type="entry name" value="TCP-1-like_intermed_sf"/>
</dbReference>
<dbReference type="NCBIfam" id="TIGR02348">
    <property type="entry name" value="GroEL"/>
    <property type="match status" value="1"/>
</dbReference>
<dbReference type="NCBIfam" id="NF000592">
    <property type="entry name" value="PRK00013.1"/>
    <property type="match status" value="1"/>
</dbReference>
<dbReference type="NCBIfam" id="NF009487">
    <property type="entry name" value="PRK12849.1"/>
    <property type="match status" value="1"/>
</dbReference>
<dbReference type="NCBIfam" id="NF009488">
    <property type="entry name" value="PRK12850.1"/>
    <property type="match status" value="1"/>
</dbReference>
<dbReference type="NCBIfam" id="NF009489">
    <property type="entry name" value="PRK12851.1"/>
    <property type="match status" value="1"/>
</dbReference>
<dbReference type="PANTHER" id="PTHR45633">
    <property type="entry name" value="60 KDA HEAT SHOCK PROTEIN, MITOCHONDRIAL"/>
    <property type="match status" value="1"/>
</dbReference>
<dbReference type="Pfam" id="PF00118">
    <property type="entry name" value="Cpn60_TCP1"/>
    <property type="match status" value="1"/>
</dbReference>
<dbReference type="PRINTS" id="PR00298">
    <property type="entry name" value="CHAPERONIN60"/>
</dbReference>
<dbReference type="SUPFAM" id="SSF52029">
    <property type="entry name" value="GroEL apical domain-like"/>
    <property type="match status" value="1"/>
</dbReference>
<dbReference type="SUPFAM" id="SSF48592">
    <property type="entry name" value="GroEL equatorial domain-like"/>
    <property type="match status" value="1"/>
</dbReference>
<dbReference type="SUPFAM" id="SSF54849">
    <property type="entry name" value="GroEL-intermediate domain like"/>
    <property type="match status" value="2"/>
</dbReference>
<dbReference type="PROSITE" id="PS00296">
    <property type="entry name" value="CHAPERONINS_CPN60"/>
    <property type="match status" value="1"/>
</dbReference>
<organism>
    <name type="scientific">Corynebacterium jeikeium (strain K411)</name>
    <dbReference type="NCBI Taxonomy" id="306537"/>
    <lineage>
        <taxon>Bacteria</taxon>
        <taxon>Bacillati</taxon>
        <taxon>Actinomycetota</taxon>
        <taxon>Actinomycetes</taxon>
        <taxon>Mycobacteriales</taxon>
        <taxon>Corynebacteriaceae</taxon>
        <taxon>Corynebacterium</taxon>
    </lineage>
</organism>
<evidence type="ECO:0000255" key="1">
    <source>
        <dbReference type="HAMAP-Rule" id="MF_00600"/>
    </source>
</evidence>